<organism>
    <name type="scientific">Acidithiobacillus ferrooxidans (strain ATCC 23270 / DSM 14882 / CIP 104768 / NCIMB 8455)</name>
    <name type="common">Ferrobacillus ferrooxidans (strain ATCC 23270)</name>
    <dbReference type="NCBI Taxonomy" id="243159"/>
    <lineage>
        <taxon>Bacteria</taxon>
        <taxon>Pseudomonadati</taxon>
        <taxon>Pseudomonadota</taxon>
        <taxon>Acidithiobacillia</taxon>
        <taxon>Acidithiobacillales</taxon>
        <taxon>Acidithiobacillaceae</taxon>
        <taxon>Acidithiobacillus</taxon>
    </lineage>
</organism>
<dbReference type="EC" id="2.7.7.6" evidence="1"/>
<dbReference type="EMBL" id="CP001219">
    <property type="protein sequence ID" value="ACK80819.1"/>
    <property type="molecule type" value="Genomic_DNA"/>
</dbReference>
<dbReference type="RefSeq" id="WP_012536208.1">
    <property type="nucleotide sequence ID" value="NC_011761.1"/>
</dbReference>
<dbReference type="SMR" id="B7J583"/>
<dbReference type="STRING" id="243159.AFE_0564"/>
<dbReference type="PaxDb" id="243159-AFE_0564"/>
<dbReference type="GeneID" id="65279922"/>
<dbReference type="KEGG" id="afr:AFE_0564"/>
<dbReference type="eggNOG" id="COG1758">
    <property type="taxonomic scope" value="Bacteria"/>
</dbReference>
<dbReference type="HOGENOM" id="CLU_125406_5_3_6"/>
<dbReference type="Proteomes" id="UP000001362">
    <property type="component" value="Chromosome"/>
</dbReference>
<dbReference type="GO" id="GO:0000428">
    <property type="term" value="C:DNA-directed RNA polymerase complex"/>
    <property type="evidence" value="ECO:0007669"/>
    <property type="project" value="UniProtKB-KW"/>
</dbReference>
<dbReference type="GO" id="GO:0003677">
    <property type="term" value="F:DNA binding"/>
    <property type="evidence" value="ECO:0007669"/>
    <property type="project" value="UniProtKB-UniRule"/>
</dbReference>
<dbReference type="GO" id="GO:0003899">
    <property type="term" value="F:DNA-directed RNA polymerase activity"/>
    <property type="evidence" value="ECO:0007669"/>
    <property type="project" value="UniProtKB-UniRule"/>
</dbReference>
<dbReference type="GO" id="GO:0006351">
    <property type="term" value="P:DNA-templated transcription"/>
    <property type="evidence" value="ECO:0007669"/>
    <property type="project" value="UniProtKB-UniRule"/>
</dbReference>
<dbReference type="Gene3D" id="3.90.940.10">
    <property type="match status" value="1"/>
</dbReference>
<dbReference type="HAMAP" id="MF_00366">
    <property type="entry name" value="RNApol_bact_RpoZ"/>
    <property type="match status" value="1"/>
</dbReference>
<dbReference type="InterPro" id="IPR003716">
    <property type="entry name" value="DNA-dir_RNA_pol_omega"/>
</dbReference>
<dbReference type="InterPro" id="IPR006110">
    <property type="entry name" value="Pol_omega/Rpo6/RPB6"/>
</dbReference>
<dbReference type="InterPro" id="IPR036161">
    <property type="entry name" value="RPB6/omega-like_sf"/>
</dbReference>
<dbReference type="NCBIfam" id="TIGR00690">
    <property type="entry name" value="rpoZ"/>
    <property type="match status" value="1"/>
</dbReference>
<dbReference type="PANTHER" id="PTHR34476">
    <property type="entry name" value="DNA-DIRECTED RNA POLYMERASE SUBUNIT OMEGA"/>
    <property type="match status" value="1"/>
</dbReference>
<dbReference type="PANTHER" id="PTHR34476:SF1">
    <property type="entry name" value="DNA-DIRECTED RNA POLYMERASE SUBUNIT OMEGA"/>
    <property type="match status" value="1"/>
</dbReference>
<dbReference type="Pfam" id="PF01192">
    <property type="entry name" value="RNA_pol_Rpb6"/>
    <property type="match status" value="1"/>
</dbReference>
<dbReference type="SMART" id="SM01409">
    <property type="entry name" value="RNA_pol_Rpb6"/>
    <property type="match status" value="1"/>
</dbReference>
<dbReference type="SUPFAM" id="SSF63562">
    <property type="entry name" value="RPB6/omega subunit-like"/>
    <property type="match status" value="1"/>
</dbReference>
<feature type="chain" id="PRO_1000121179" description="DNA-directed RNA polymerase subunit omega">
    <location>
        <begin position="1"/>
        <end position="91"/>
    </location>
</feature>
<feature type="region of interest" description="Disordered" evidence="2">
    <location>
        <begin position="66"/>
        <end position="91"/>
    </location>
</feature>
<proteinExistence type="inferred from homology"/>
<comment type="function">
    <text evidence="1">Promotes RNA polymerase assembly. Latches the N- and C-terminal regions of the beta' subunit thereby facilitating its interaction with the beta and alpha subunits.</text>
</comment>
<comment type="catalytic activity">
    <reaction evidence="1">
        <text>RNA(n) + a ribonucleoside 5'-triphosphate = RNA(n+1) + diphosphate</text>
        <dbReference type="Rhea" id="RHEA:21248"/>
        <dbReference type="Rhea" id="RHEA-COMP:14527"/>
        <dbReference type="Rhea" id="RHEA-COMP:17342"/>
        <dbReference type="ChEBI" id="CHEBI:33019"/>
        <dbReference type="ChEBI" id="CHEBI:61557"/>
        <dbReference type="ChEBI" id="CHEBI:140395"/>
        <dbReference type="EC" id="2.7.7.6"/>
    </reaction>
</comment>
<comment type="subunit">
    <text evidence="1">The RNAP catalytic core consists of 2 alpha, 1 beta, 1 beta' and 1 omega subunit. When a sigma factor is associated with the core the holoenzyme is formed, which can initiate transcription.</text>
</comment>
<comment type="similarity">
    <text evidence="1">Belongs to the RNA polymerase subunit omega family.</text>
</comment>
<accession>B7J583</accession>
<keyword id="KW-0240">DNA-directed RNA polymerase</keyword>
<keyword id="KW-0548">Nucleotidyltransferase</keyword>
<keyword id="KW-1185">Reference proteome</keyword>
<keyword id="KW-0804">Transcription</keyword>
<keyword id="KW-0808">Transferase</keyword>
<protein>
    <recommendedName>
        <fullName evidence="1">DNA-directed RNA polymerase subunit omega</fullName>
        <shortName evidence="1">RNAP omega subunit</shortName>
        <ecNumber evidence="1">2.7.7.6</ecNumber>
    </recommendedName>
    <alternativeName>
        <fullName evidence="1">RNA polymerase omega subunit</fullName>
    </alternativeName>
    <alternativeName>
        <fullName evidence="1">Transcriptase subunit omega</fullName>
    </alternativeName>
</protein>
<reference key="1">
    <citation type="journal article" date="2008" name="BMC Genomics">
        <title>Acidithiobacillus ferrooxidans metabolism: from genome sequence to industrial applications.</title>
        <authorList>
            <person name="Valdes J."/>
            <person name="Pedroso I."/>
            <person name="Quatrini R."/>
            <person name="Dodson R.J."/>
            <person name="Tettelin H."/>
            <person name="Blake R. II"/>
            <person name="Eisen J.A."/>
            <person name="Holmes D.S."/>
        </authorList>
    </citation>
    <scope>NUCLEOTIDE SEQUENCE [LARGE SCALE GENOMIC DNA]</scope>
    <source>
        <strain>ATCC 23270 / DSM 14882 / CIP 104768 / NCIMB 8455</strain>
    </source>
</reference>
<evidence type="ECO:0000255" key="1">
    <source>
        <dbReference type="HAMAP-Rule" id="MF_00366"/>
    </source>
</evidence>
<evidence type="ECO:0000256" key="2">
    <source>
        <dbReference type="SAM" id="MobiDB-lite"/>
    </source>
</evidence>
<name>RPOZ_ACIF2</name>
<sequence>MARVTVEDCLEHVDNRFELTLVAARRARQLASGAAPEVEPGRDKNTVIALREVAAGKVSRAILDEQMPPPLPNFPGAANREATGAEDAAGE</sequence>
<gene>
    <name evidence="1" type="primary">rpoZ</name>
    <name type="ordered locus">AFE_0564</name>
</gene>